<proteinExistence type="evidence at transcript level"/>
<dbReference type="EMBL" id="J04498">
    <property type="protein sequence ID" value="AAB00747.1"/>
    <property type="molecule type" value="Genomic_DNA"/>
</dbReference>
<dbReference type="SMR" id="P12452"/>
<dbReference type="Proteomes" id="UP000007427">
    <property type="component" value="Segment"/>
</dbReference>
<dbReference type="GO" id="GO:0030430">
    <property type="term" value="C:host cell cytoplasm"/>
    <property type="evidence" value="ECO:0007669"/>
    <property type="project" value="UniProtKB-SubCell"/>
</dbReference>
<dbReference type="GO" id="GO:0020002">
    <property type="term" value="C:host cell plasma membrane"/>
    <property type="evidence" value="ECO:0007669"/>
    <property type="project" value="UniProtKB-SubCell"/>
</dbReference>
<dbReference type="GO" id="GO:0016020">
    <property type="term" value="C:membrane"/>
    <property type="evidence" value="ECO:0007669"/>
    <property type="project" value="UniProtKB-KW"/>
</dbReference>
<dbReference type="GO" id="GO:0044423">
    <property type="term" value="C:virion component"/>
    <property type="evidence" value="ECO:0007669"/>
    <property type="project" value="UniProtKB-KW"/>
</dbReference>
<dbReference type="GO" id="GO:0019058">
    <property type="term" value="P:viral life cycle"/>
    <property type="evidence" value="ECO:0007669"/>
    <property type="project" value="InterPro"/>
</dbReference>
<dbReference type="InterPro" id="IPR000475">
    <property type="entry name" value="Vif"/>
</dbReference>
<dbReference type="Pfam" id="PF00559">
    <property type="entry name" value="Vif"/>
    <property type="match status" value="1"/>
</dbReference>
<dbReference type="PRINTS" id="PR00349">
    <property type="entry name" value="VIRIONINFFCT"/>
</dbReference>
<name>VIF_HV2SB</name>
<organism>
    <name type="scientific">Human immunodeficiency virus type 2 subtype A (isolate SBLISY)</name>
    <name type="common">HIV-2</name>
    <dbReference type="NCBI Taxonomy" id="11718"/>
    <lineage>
        <taxon>Viruses</taxon>
        <taxon>Riboviria</taxon>
        <taxon>Pararnavirae</taxon>
        <taxon>Artverviricota</taxon>
        <taxon>Revtraviricetes</taxon>
        <taxon>Ortervirales</taxon>
        <taxon>Retroviridae</taxon>
        <taxon>Orthoretrovirinae</taxon>
        <taxon>Lentivirus</taxon>
        <taxon>Human immunodeficiency virus 2</taxon>
    </lineage>
</organism>
<organismHost>
    <name type="scientific">Homo sapiens</name>
    <name type="common">Human</name>
    <dbReference type="NCBI Taxonomy" id="9606"/>
</organismHost>
<accession>P12452</accession>
<feature type="chain" id="PRO_0000085322" description="Virion infectivity factor">
    <location>
        <begin position="1"/>
        <end position="215"/>
    </location>
</feature>
<feature type="region of interest" description="Multimerization" evidence="1">
    <location>
        <begin position="154"/>
        <end position="167"/>
    </location>
</feature>
<feature type="short sequence motif" description="HCCH motif" evidence="1">
    <location>
        <begin position="110"/>
        <end position="141"/>
    </location>
</feature>
<feature type="short sequence motif" description="BC-box-like motif" evidence="1">
    <location>
        <begin position="147"/>
        <end position="156"/>
    </location>
</feature>
<feature type="modified residue" description="Phosphothreonine; by host MAP4K1" evidence="1">
    <location>
        <position position="98"/>
    </location>
</feature>
<feature type="modified residue" description="Phosphoserine; by host" evidence="1">
    <location>
        <position position="147"/>
    </location>
</feature>
<gene>
    <name type="primary">vif</name>
</gene>
<evidence type="ECO:0000250" key="1"/>
<evidence type="ECO:0000305" key="2"/>
<reference key="1">
    <citation type="journal article" date="1989" name="Proc. Natl. Acad. Sci. U.S.A.">
        <title>Molecular and biological characterization of a replication competent human immunodeficiency type 2 (HIV-2) proviral clone.</title>
        <authorList>
            <person name="Franchini G."/>
            <person name="Fargnoli K.A."/>
            <person name="Giombini F."/>
            <person name="Jagodzinski L.L."/>
            <person name="de Rossi A."/>
            <person name="Bosch M."/>
            <person name="Biberfeld G."/>
            <person name="Fenyo A.M."/>
            <person name="Albert J."/>
            <person name="Gallo R.C."/>
            <person name="Wong-Staal F."/>
        </authorList>
    </citation>
    <scope>NUCLEOTIDE SEQUENCE [GENOMIC DNA]</scope>
</reference>
<protein>
    <recommendedName>
        <fullName>Virion infectivity factor</fullName>
        <shortName>Vif</shortName>
    </recommendedName>
    <alternativeName>
        <fullName>Q protein</fullName>
    </alternativeName>
    <alternativeName>
        <fullName>SOR protein</fullName>
    </alternativeName>
</protein>
<comment type="function">
    <text evidence="1">Counteracts the innate antiviral activity of APOBEC3G. Forms a complex with host APOBEC3G thus preventing the entry of this lethally hypermutating enzyme into progeny virions. Functions as an adapter molecule, recruiting APOBEC3G to the ubiquitin-proteasome machinery. Targets APOBEC3G for degradation through the assembly with elongin BC complex, CUL5 and RBX1. Binds viral RNA and affects the stability of viral nucleoprotein core. May play a role in viral morphology (By similarity).</text>
</comment>
<comment type="subunit">
    <text evidence="1">Homomultimer; in vitro and presumably in vivo. Interacts with viral Pr55Gag precursor and human APOBEC3G. The interaction between Vif and APOBEC3G is species-specific, which may play a role in restricting the replication of HIV to humans. Forms an E3 ligase complex by interacting with human CUL5 and elongin BC complex (ELOB and ELOC) (By similarity).</text>
</comment>
<comment type="subcellular location">
    <subcellularLocation>
        <location evidence="1">Host cytoplasm</location>
    </subcellularLocation>
    <subcellularLocation>
        <location evidence="1">Host cell membrane</location>
        <topology evidence="1">Peripheral membrane protein</topology>
        <orientation evidence="1">Cytoplasmic side</orientation>
    </subcellularLocation>
    <subcellularLocation>
        <location evidence="1">Virion</location>
    </subcellularLocation>
    <text evidence="1">In the cytoplasm, seems to colocalize with intermediate filament vimentin. A fraction is associated with the cytoplasmic side of cellular membranes, presumably via the interaction with Pr55Gag precursor (By similarity).</text>
</comment>
<comment type="induction">
    <text>Expressed late during infection in a Rev-dependent manner.</text>
</comment>
<comment type="domain">
    <text evidence="1">The BC-like-box motif mediates the interaction with elongin BC complex.</text>
</comment>
<comment type="domain">
    <text evidence="1">The HCCH motif (H-x(5)-C-x(18)-C-x(5)-H) mediates the interaction with CUL5.</text>
</comment>
<comment type="PTM">
    <text evidence="1">Processed in virion by the viral protease.</text>
</comment>
<comment type="PTM">
    <text evidence="1">Highly phosphorylated on serine and threonine residues.</text>
</comment>
<comment type="PTM">
    <text evidence="1">Polyubiquitinated and degraded by the proteasome in the presence of APOBEC3G.</text>
</comment>
<comment type="miscellaneous">
    <text>Required for replication in 'nonpermissive' cells, including primary T-cells, macrophages and certain T-cell lines, but is dispensable for replication in 'permissive' cell lines, such as 293T cells. In nonpermissive cells, Vif-defective viruses can produce virions, but they fail to complete reverse transcription and cannot successfully infect new cells.</text>
</comment>
<comment type="miscellaneous">
    <text>Vif-defective viruses show catastrophic failure in reverse transcription due to APOBEC-induced mutations that initiate a DNA base repair pathway and compromise the structural integrity of the ssDNA. In the absence of Vif, the virion is morphologically abnormal.</text>
</comment>
<comment type="similarity">
    <text evidence="2">Belongs to the primate lentivirus group Vif protein family.</text>
</comment>
<sequence>MDQGKRWIAVPTWRVPGRMEKWHSLIKYLKYRTKDLEQVRYVPHHKVGWAWWTCSRVIFPLKGNSHLEIQAYWNLTPEKGWLSSYSVRMTWYSEGFWTDVTPDCADTLIHSTYFSCFTAGEVRRAIRGEKSLSCCNYPQAHKSKVPSLQFLALVVVQQNDKPQRDNTTRKQWRRNYRRGLRLARQDGRSHKQRGSEPPAQGAYFPGVAKVLEILA</sequence>
<keyword id="KW-0014">AIDS</keyword>
<keyword id="KW-1032">Host cell membrane</keyword>
<keyword id="KW-1035">Host cytoplasm</keyword>
<keyword id="KW-1043">Host membrane</keyword>
<keyword id="KW-0945">Host-virus interaction</keyword>
<keyword id="KW-0472">Membrane</keyword>
<keyword id="KW-0597">Phosphoprotein</keyword>
<keyword id="KW-0832">Ubl conjugation</keyword>
<keyword id="KW-0833">Ubl conjugation pathway</keyword>
<keyword id="KW-0946">Virion</keyword>